<protein>
    <recommendedName>
        <fullName evidence="1">Adenine phosphoribosyltransferase</fullName>
        <shortName evidence="1">APRT</shortName>
        <ecNumber evidence="1">2.4.2.7</ecNumber>
    </recommendedName>
</protein>
<comment type="function">
    <text evidence="1">Catalyzes a salvage reaction resulting in the formation of AMP, that is energically less costly than de novo synthesis.</text>
</comment>
<comment type="catalytic activity">
    <reaction evidence="1">
        <text>AMP + diphosphate = 5-phospho-alpha-D-ribose 1-diphosphate + adenine</text>
        <dbReference type="Rhea" id="RHEA:16609"/>
        <dbReference type="ChEBI" id="CHEBI:16708"/>
        <dbReference type="ChEBI" id="CHEBI:33019"/>
        <dbReference type="ChEBI" id="CHEBI:58017"/>
        <dbReference type="ChEBI" id="CHEBI:456215"/>
        <dbReference type="EC" id="2.4.2.7"/>
    </reaction>
</comment>
<comment type="pathway">
    <text evidence="1">Purine metabolism; AMP biosynthesis via salvage pathway; AMP from adenine: step 1/1.</text>
</comment>
<comment type="subunit">
    <text evidence="1">Homodimer.</text>
</comment>
<comment type="subcellular location">
    <subcellularLocation>
        <location evidence="1">Cytoplasm</location>
    </subcellularLocation>
</comment>
<comment type="similarity">
    <text evidence="1">Belongs to the purine/pyrimidine phosphoribosyltransferase family.</text>
</comment>
<proteinExistence type="inferred from homology"/>
<evidence type="ECO:0000255" key="1">
    <source>
        <dbReference type="HAMAP-Rule" id="MF_00004"/>
    </source>
</evidence>
<name>APT_YERPY</name>
<organism>
    <name type="scientific">Yersinia pseudotuberculosis serotype O:3 (strain YPIII)</name>
    <dbReference type="NCBI Taxonomy" id="502800"/>
    <lineage>
        <taxon>Bacteria</taxon>
        <taxon>Pseudomonadati</taxon>
        <taxon>Pseudomonadota</taxon>
        <taxon>Gammaproteobacteria</taxon>
        <taxon>Enterobacterales</taxon>
        <taxon>Yersiniaceae</taxon>
        <taxon>Yersinia</taxon>
    </lineage>
</organism>
<sequence>MTASASKTAQQLKYIKDSIKTIPDYPKAGILFRDVTSLLENPKAYSASIELLSEHYSESGVTKVVGTEARGFLFGAPVALALGVGFVPVRKPGKLPRETISESYELEYGTDTLEIHTDSIQPGDKVLVVDDLLATGGTIEATVKLIRRLGGEVVHAAFIINLPELGGEARLTQQGIHCYSLVSFDGH</sequence>
<accession>B1JHN6</accession>
<keyword id="KW-0963">Cytoplasm</keyword>
<keyword id="KW-0328">Glycosyltransferase</keyword>
<keyword id="KW-0660">Purine salvage</keyword>
<keyword id="KW-0808">Transferase</keyword>
<dbReference type="EC" id="2.4.2.7" evidence="1"/>
<dbReference type="EMBL" id="CP000950">
    <property type="protein sequence ID" value="ACA69468.1"/>
    <property type="molecule type" value="Genomic_DNA"/>
</dbReference>
<dbReference type="RefSeq" id="WP_012105567.1">
    <property type="nucleotide sequence ID" value="NZ_CP009792.1"/>
</dbReference>
<dbReference type="SMR" id="B1JHN6"/>
<dbReference type="GeneID" id="49786953"/>
<dbReference type="KEGG" id="ypy:YPK_3199"/>
<dbReference type="PATRIC" id="fig|502800.11.peg.3927"/>
<dbReference type="UniPathway" id="UPA00588">
    <property type="reaction ID" value="UER00646"/>
</dbReference>
<dbReference type="GO" id="GO:0005829">
    <property type="term" value="C:cytosol"/>
    <property type="evidence" value="ECO:0007669"/>
    <property type="project" value="TreeGrafter"/>
</dbReference>
<dbReference type="GO" id="GO:0003999">
    <property type="term" value="F:adenine phosphoribosyltransferase activity"/>
    <property type="evidence" value="ECO:0007669"/>
    <property type="project" value="UniProtKB-UniRule"/>
</dbReference>
<dbReference type="GO" id="GO:0006168">
    <property type="term" value="P:adenine salvage"/>
    <property type="evidence" value="ECO:0007669"/>
    <property type="project" value="InterPro"/>
</dbReference>
<dbReference type="GO" id="GO:0044209">
    <property type="term" value="P:AMP salvage"/>
    <property type="evidence" value="ECO:0007669"/>
    <property type="project" value="UniProtKB-UniRule"/>
</dbReference>
<dbReference type="GO" id="GO:0006166">
    <property type="term" value="P:purine ribonucleoside salvage"/>
    <property type="evidence" value="ECO:0007669"/>
    <property type="project" value="UniProtKB-KW"/>
</dbReference>
<dbReference type="CDD" id="cd06223">
    <property type="entry name" value="PRTases_typeI"/>
    <property type="match status" value="1"/>
</dbReference>
<dbReference type="FunFam" id="3.40.50.2020:FF:000004">
    <property type="entry name" value="Adenine phosphoribosyltransferase"/>
    <property type="match status" value="1"/>
</dbReference>
<dbReference type="Gene3D" id="3.40.50.2020">
    <property type="match status" value="1"/>
</dbReference>
<dbReference type="HAMAP" id="MF_00004">
    <property type="entry name" value="Aden_phosphoribosyltr"/>
    <property type="match status" value="1"/>
</dbReference>
<dbReference type="InterPro" id="IPR005764">
    <property type="entry name" value="Ade_phspho_trans"/>
</dbReference>
<dbReference type="InterPro" id="IPR050120">
    <property type="entry name" value="Adenine_PRTase"/>
</dbReference>
<dbReference type="InterPro" id="IPR000836">
    <property type="entry name" value="PRibTrfase_dom"/>
</dbReference>
<dbReference type="InterPro" id="IPR029057">
    <property type="entry name" value="PRTase-like"/>
</dbReference>
<dbReference type="NCBIfam" id="TIGR01090">
    <property type="entry name" value="apt"/>
    <property type="match status" value="1"/>
</dbReference>
<dbReference type="NCBIfam" id="NF002632">
    <property type="entry name" value="PRK02304.1-1"/>
    <property type="match status" value="1"/>
</dbReference>
<dbReference type="NCBIfam" id="NF002633">
    <property type="entry name" value="PRK02304.1-2"/>
    <property type="match status" value="1"/>
</dbReference>
<dbReference type="NCBIfam" id="NF002634">
    <property type="entry name" value="PRK02304.1-3"/>
    <property type="match status" value="1"/>
</dbReference>
<dbReference type="NCBIfam" id="NF002636">
    <property type="entry name" value="PRK02304.1-5"/>
    <property type="match status" value="1"/>
</dbReference>
<dbReference type="PANTHER" id="PTHR11776">
    <property type="entry name" value="ADENINE PHOSPHORIBOSYLTRANSFERASE"/>
    <property type="match status" value="1"/>
</dbReference>
<dbReference type="PANTHER" id="PTHR11776:SF7">
    <property type="entry name" value="PHOSPHORIBOSYLTRANSFERASE DOMAIN-CONTAINING PROTEIN"/>
    <property type="match status" value="1"/>
</dbReference>
<dbReference type="Pfam" id="PF00156">
    <property type="entry name" value="Pribosyltran"/>
    <property type="match status" value="1"/>
</dbReference>
<dbReference type="SUPFAM" id="SSF53271">
    <property type="entry name" value="PRTase-like"/>
    <property type="match status" value="1"/>
</dbReference>
<dbReference type="PROSITE" id="PS00103">
    <property type="entry name" value="PUR_PYR_PR_TRANSFER"/>
    <property type="match status" value="1"/>
</dbReference>
<feature type="chain" id="PRO_1000089020" description="Adenine phosphoribosyltransferase">
    <location>
        <begin position="1"/>
        <end position="187"/>
    </location>
</feature>
<gene>
    <name evidence="1" type="primary">apt</name>
    <name type="ordered locus">YPK_3199</name>
</gene>
<reference key="1">
    <citation type="submission" date="2008-02" db="EMBL/GenBank/DDBJ databases">
        <title>Complete sequence of Yersinia pseudotuberculosis YPIII.</title>
        <authorList>
            <consortium name="US DOE Joint Genome Institute"/>
            <person name="Copeland A."/>
            <person name="Lucas S."/>
            <person name="Lapidus A."/>
            <person name="Glavina del Rio T."/>
            <person name="Dalin E."/>
            <person name="Tice H."/>
            <person name="Bruce D."/>
            <person name="Goodwin L."/>
            <person name="Pitluck S."/>
            <person name="Munk A.C."/>
            <person name="Brettin T."/>
            <person name="Detter J.C."/>
            <person name="Han C."/>
            <person name="Tapia R."/>
            <person name="Schmutz J."/>
            <person name="Larimer F."/>
            <person name="Land M."/>
            <person name="Hauser L."/>
            <person name="Challacombe J.F."/>
            <person name="Green L."/>
            <person name="Lindler L.E."/>
            <person name="Nikolich M.P."/>
            <person name="Richardson P."/>
        </authorList>
    </citation>
    <scope>NUCLEOTIDE SEQUENCE [LARGE SCALE GENOMIC DNA]</scope>
    <source>
        <strain>YPIII</strain>
    </source>
</reference>